<name>PURA_MYCMS</name>
<proteinExistence type="inferred from homology"/>
<sequence>MKNNYKSLVIVGSQWGDEGKGKITDYFSQKADVVVRFAGGDNAGHMIEFNNKRHKVTIIPSGVFNPKVKNIIGNGTVINLKSLVNEIKRLNESNISTDNVFVSDRAHLIFDWHALIDQLQEENRKENKIGTTKRGIGPTYADKAARYGIRICDFQNPNFKEILKENLDYHNQIITKVYNHEPLDFDVIYNESMTNYQFIKNNIIDSGYEVSNLINENKFVLFEGAQGVLLDIDHGTYPFVTSSNCSANNASIGTGIHNKQINKVLGIVKAYNTRVGSGAMVSEIKTELAHKLRERGREYGLNTGRPRRIGWLDLVALKYAIRVGGIDQLFLTLFDVLDTETKIKICTHYKLDGKIIDWFPASDYELKRCEPVYEELDGWNQDITKVTSFEELPINAQKYIKRIEEIVKVPFLGFSVGSDRKQTILIKGEFDD</sequence>
<comment type="function">
    <text evidence="1">Plays an important role in the de novo pathway of purine nucleotide biosynthesis. Catalyzes the first committed step in the biosynthesis of AMP from IMP.</text>
</comment>
<comment type="catalytic activity">
    <reaction evidence="1">
        <text>IMP + L-aspartate + GTP = N(6)-(1,2-dicarboxyethyl)-AMP + GDP + phosphate + 2 H(+)</text>
        <dbReference type="Rhea" id="RHEA:15753"/>
        <dbReference type="ChEBI" id="CHEBI:15378"/>
        <dbReference type="ChEBI" id="CHEBI:29991"/>
        <dbReference type="ChEBI" id="CHEBI:37565"/>
        <dbReference type="ChEBI" id="CHEBI:43474"/>
        <dbReference type="ChEBI" id="CHEBI:57567"/>
        <dbReference type="ChEBI" id="CHEBI:58053"/>
        <dbReference type="ChEBI" id="CHEBI:58189"/>
        <dbReference type="EC" id="6.3.4.4"/>
    </reaction>
</comment>
<comment type="cofactor">
    <cofactor evidence="1">
        <name>Mg(2+)</name>
        <dbReference type="ChEBI" id="CHEBI:18420"/>
    </cofactor>
    <text evidence="1">Binds 1 Mg(2+) ion per subunit.</text>
</comment>
<comment type="pathway">
    <text evidence="1">Purine metabolism; AMP biosynthesis via de novo pathway; AMP from IMP: step 1/2.</text>
</comment>
<comment type="subunit">
    <text evidence="1">Homodimer.</text>
</comment>
<comment type="subcellular location">
    <subcellularLocation>
        <location evidence="1">Cytoplasm</location>
    </subcellularLocation>
</comment>
<comment type="similarity">
    <text evidence="1">Belongs to the adenylosuccinate synthetase family.</text>
</comment>
<organism>
    <name type="scientific">Mycoplasma mycoides subsp. mycoides SC (strain CCUG 32753 / NCTC 10114 / PG1)</name>
    <dbReference type="NCBI Taxonomy" id="272632"/>
    <lineage>
        <taxon>Bacteria</taxon>
        <taxon>Bacillati</taxon>
        <taxon>Mycoplasmatota</taxon>
        <taxon>Mollicutes</taxon>
        <taxon>Mycoplasmataceae</taxon>
        <taxon>Mycoplasma</taxon>
    </lineage>
</organism>
<keyword id="KW-0963">Cytoplasm</keyword>
<keyword id="KW-0342">GTP-binding</keyword>
<keyword id="KW-0436">Ligase</keyword>
<keyword id="KW-0460">Magnesium</keyword>
<keyword id="KW-0479">Metal-binding</keyword>
<keyword id="KW-0547">Nucleotide-binding</keyword>
<keyword id="KW-0658">Purine biosynthesis</keyword>
<keyword id="KW-1185">Reference proteome</keyword>
<protein>
    <recommendedName>
        <fullName evidence="1">Adenylosuccinate synthetase</fullName>
        <shortName evidence="1">AMPSase</shortName>
        <shortName evidence="1">AdSS</shortName>
        <ecNumber evidence="1">6.3.4.4</ecNumber>
    </recommendedName>
    <alternativeName>
        <fullName evidence="1">IMP--aspartate ligase</fullName>
    </alternativeName>
</protein>
<evidence type="ECO:0000255" key="1">
    <source>
        <dbReference type="HAMAP-Rule" id="MF_00011"/>
    </source>
</evidence>
<dbReference type="EC" id="6.3.4.4" evidence="1"/>
<dbReference type="EMBL" id="BX293980">
    <property type="protein sequence ID" value="CAE77463.1"/>
    <property type="molecule type" value="Genomic_DNA"/>
</dbReference>
<dbReference type="RefSeq" id="NP_975821.1">
    <property type="nucleotide sequence ID" value="NC_005364.2"/>
</dbReference>
<dbReference type="RefSeq" id="WP_011167008.1">
    <property type="nucleotide sequence ID" value="NC_005364.2"/>
</dbReference>
<dbReference type="SMR" id="Q6MSC7"/>
<dbReference type="STRING" id="272632.MSC_0850"/>
<dbReference type="KEGG" id="mmy:MSC_0850"/>
<dbReference type="PATRIC" id="fig|272632.4.peg.914"/>
<dbReference type="eggNOG" id="COG0104">
    <property type="taxonomic scope" value="Bacteria"/>
</dbReference>
<dbReference type="HOGENOM" id="CLU_029848_0_0_14"/>
<dbReference type="UniPathway" id="UPA00075">
    <property type="reaction ID" value="UER00335"/>
</dbReference>
<dbReference type="Proteomes" id="UP000001016">
    <property type="component" value="Chromosome"/>
</dbReference>
<dbReference type="GO" id="GO:0005737">
    <property type="term" value="C:cytoplasm"/>
    <property type="evidence" value="ECO:0007669"/>
    <property type="project" value="UniProtKB-SubCell"/>
</dbReference>
<dbReference type="GO" id="GO:0004019">
    <property type="term" value="F:adenylosuccinate synthase activity"/>
    <property type="evidence" value="ECO:0007669"/>
    <property type="project" value="UniProtKB-UniRule"/>
</dbReference>
<dbReference type="GO" id="GO:0005525">
    <property type="term" value="F:GTP binding"/>
    <property type="evidence" value="ECO:0007669"/>
    <property type="project" value="UniProtKB-UniRule"/>
</dbReference>
<dbReference type="GO" id="GO:0000287">
    <property type="term" value="F:magnesium ion binding"/>
    <property type="evidence" value="ECO:0007669"/>
    <property type="project" value="UniProtKB-UniRule"/>
</dbReference>
<dbReference type="GO" id="GO:0044208">
    <property type="term" value="P:'de novo' AMP biosynthetic process"/>
    <property type="evidence" value="ECO:0007669"/>
    <property type="project" value="UniProtKB-UniRule"/>
</dbReference>
<dbReference type="GO" id="GO:0046040">
    <property type="term" value="P:IMP metabolic process"/>
    <property type="evidence" value="ECO:0007669"/>
    <property type="project" value="TreeGrafter"/>
</dbReference>
<dbReference type="CDD" id="cd03108">
    <property type="entry name" value="AdSS"/>
    <property type="match status" value="1"/>
</dbReference>
<dbReference type="FunFam" id="1.10.300.10:FF:000001">
    <property type="entry name" value="Adenylosuccinate synthetase"/>
    <property type="match status" value="1"/>
</dbReference>
<dbReference type="FunFam" id="3.90.170.10:FF:000001">
    <property type="entry name" value="Adenylosuccinate synthetase"/>
    <property type="match status" value="1"/>
</dbReference>
<dbReference type="Gene3D" id="3.40.440.10">
    <property type="entry name" value="Adenylosuccinate Synthetase, subunit A, domain 1"/>
    <property type="match status" value="1"/>
</dbReference>
<dbReference type="Gene3D" id="1.10.300.10">
    <property type="entry name" value="Adenylosuccinate Synthetase, subunit A, domain 2"/>
    <property type="match status" value="1"/>
</dbReference>
<dbReference type="Gene3D" id="3.90.170.10">
    <property type="entry name" value="Adenylosuccinate Synthetase, subunit A, domain 3"/>
    <property type="match status" value="1"/>
</dbReference>
<dbReference type="HAMAP" id="MF_00011">
    <property type="entry name" value="Adenylosucc_synth"/>
    <property type="match status" value="1"/>
</dbReference>
<dbReference type="InterPro" id="IPR018220">
    <property type="entry name" value="Adenylosuccin_syn_GTP-bd"/>
</dbReference>
<dbReference type="InterPro" id="IPR033128">
    <property type="entry name" value="Adenylosuccin_syn_Lys_AS"/>
</dbReference>
<dbReference type="InterPro" id="IPR042109">
    <property type="entry name" value="Adenylosuccinate_synth_dom1"/>
</dbReference>
<dbReference type="InterPro" id="IPR042110">
    <property type="entry name" value="Adenylosuccinate_synth_dom2"/>
</dbReference>
<dbReference type="InterPro" id="IPR042111">
    <property type="entry name" value="Adenylosuccinate_synth_dom3"/>
</dbReference>
<dbReference type="InterPro" id="IPR001114">
    <property type="entry name" value="Adenylosuccinate_synthetase"/>
</dbReference>
<dbReference type="InterPro" id="IPR027417">
    <property type="entry name" value="P-loop_NTPase"/>
</dbReference>
<dbReference type="NCBIfam" id="NF002223">
    <property type="entry name" value="PRK01117.1"/>
    <property type="match status" value="1"/>
</dbReference>
<dbReference type="NCBIfam" id="TIGR00184">
    <property type="entry name" value="purA"/>
    <property type="match status" value="1"/>
</dbReference>
<dbReference type="PANTHER" id="PTHR11846">
    <property type="entry name" value="ADENYLOSUCCINATE SYNTHETASE"/>
    <property type="match status" value="1"/>
</dbReference>
<dbReference type="PANTHER" id="PTHR11846:SF0">
    <property type="entry name" value="ADENYLOSUCCINATE SYNTHETASE"/>
    <property type="match status" value="1"/>
</dbReference>
<dbReference type="Pfam" id="PF00709">
    <property type="entry name" value="Adenylsucc_synt"/>
    <property type="match status" value="1"/>
</dbReference>
<dbReference type="SMART" id="SM00788">
    <property type="entry name" value="Adenylsucc_synt"/>
    <property type="match status" value="1"/>
</dbReference>
<dbReference type="SUPFAM" id="SSF52540">
    <property type="entry name" value="P-loop containing nucleoside triphosphate hydrolases"/>
    <property type="match status" value="1"/>
</dbReference>
<dbReference type="PROSITE" id="PS01266">
    <property type="entry name" value="ADENYLOSUCCIN_SYN_1"/>
    <property type="match status" value="1"/>
</dbReference>
<dbReference type="PROSITE" id="PS00513">
    <property type="entry name" value="ADENYLOSUCCIN_SYN_2"/>
    <property type="match status" value="1"/>
</dbReference>
<accession>Q6MSC7</accession>
<feature type="chain" id="PRO_0000224295" description="Adenylosuccinate synthetase">
    <location>
        <begin position="1"/>
        <end position="432"/>
    </location>
</feature>
<feature type="active site" description="Proton acceptor" evidence="1">
    <location>
        <position position="17"/>
    </location>
</feature>
<feature type="active site" description="Proton donor" evidence="1">
    <location>
        <position position="45"/>
    </location>
</feature>
<feature type="binding site" evidence="1">
    <location>
        <begin position="16"/>
        <end position="22"/>
    </location>
    <ligand>
        <name>GTP</name>
        <dbReference type="ChEBI" id="CHEBI:37565"/>
    </ligand>
</feature>
<feature type="binding site" description="in other chain" evidence="1">
    <location>
        <begin position="17"/>
        <end position="20"/>
    </location>
    <ligand>
        <name>IMP</name>
        <dbReference type="ChEBI" id="CHEBI:58053"/>
        <note>ligand shared between dimeric partners</note>
    </ligand>
</feature>
<feature type="binding site" evidence="1">
    <location>
        <position position="17"/>
    </location>
    <ligand>
        <name>Mg(2+)</name>
        <dbReference type="ChEBI" id="CHEBI:18420"/>
    </ligand>
</feature>
<feature type="binding site" description="in other chain" evidence="1">
    <location>
        <begin position="42"/>
        <end position="45"/>
    </location>
    <ligand>
        <name>IMP</name>
        <dbReference type="ChEBI" id="CHEBI:58053"/>
        <note>ligand shared between dimeric partners</note>
    </ligand>
</feature>
<feature type="binding site" evidence="1">
    <location>
        <begin position="44"/>
        <end position="46"/>
    </location>
    <ligand>
        <name>GTP</name>
        <dbReference type="ChEBI" id="CHEBI:37565"/>
    </ligand>
</feature>
<feature type="binding site" evidence="1">
    <location>
        <position position="44"/>
    </location>
    <ligand>
        <name>Mg(2+)</name>
        <dbReference type="ChEBI" id="CHEBI:18420"/>
    </ligand>
</feature>
<feature type="binding site" description="in other chain" evidence="1">
    <location>
        <position position="132"/>
    </location>
    <ligand>
        <name>IMP</name>
        <dbReference type="ChEBI" id="CHEBI:58053"/>
        <note>ligand shared between dimeric partners</note>
    </ligand>
</feature>
<feature type="binding site" evidence="1">
    <location>
        <position position="146"/>
    </location>
    <ligand>
        <name>IMP</name>
        <dbReference type="ChEBI" id="CHEBI:58053"/>
        <note>ligand shared between dimeric partners</note>
    </ligand>
</feature>
<feature type="binding site" description="in other chain" evidence="1">
    <location>
        <position position="226"/>
    </location>
    <ligand>
        <name>IMP</name>
        <dbReference type="ChEBI" id="CHEBI:58053"/>
        <note>ligand shared between dimeric partners</note>
    </ligand>
</feature>
<feature type="binding site" description="in other chain" evidence="1">
    <location>
        <position position="241"/>
    </location>
    <ligand>
        <name>IMP</name>
        <dbReference type="ChEBI" id="CHEBI:58053"/>
        <note>ligand shared between dimeric partners</note>
    </ligand>
</feature>
<feature type="binding site" evidence="1">
    <location>
        <begin position="301"/>
        <end position="307"/>
    </location>
    <ligand>
        <name>substrate</name>
    </ligand>
</feature>
<feature type="binding site" description="in other chain" evidence="1">
    <location>
        <position position="305"/>
    </location>
    <ligand>
        <name>IMP</name>
        <dbReference type="ChEBI" id="CHEBI:58053"/>
        <note>ligand shared between dimeric partners</note>
    </ligand>
</feature>
<feature type="binding site" evidence="1">
    <location>
        <position position="307"/>
    </location>
    <ligand>
        <name>GTP</name>
        <dbReference type="ChEBI" id="CHEBI:37565"/>
    </ligand>
</feature>
<feature type="binding site" evidence="1">
    <location>
        <begin position="333"/>
        <end position="335"/>
    </location>
    <ligand>
        <name>GTP</name>
        <dbReference type="ChEBI" id="CHEBI:37565"/>
    </ligand>
</feature>
<feature type="binding site" evidence="1">
    <location>
        <begin position="415"/>
        <end position="417"/>
    </location>
    <ligand>
        <name>GTP</name>
        <dbReference type="ChEBI" id="CHEBI:37565"/>
    </ligand>
</feature>
<gene>
    <name evidence="1" type="primary">purA</name>
    <name type="ordered locus">MSC_0850</name>
</gene>
<reference key="1">
    <citation type="journal article" date="2004" name="Genome Res.">
        <title>The genome sequence of Mycoplasma mycoides subsp. mycoides SC type strain PG1T, the causative agent of contagious bovine pleuropneumonia (CBPP).</title>
        <authorList>
            <person name="Westberg J."/>
            <person name="Persson A."/>
            <person name="Holmberg A."/>
            <person name="Goesmann A."/>
            <person name="Lundeberg J."/>
            <person name="Johansson K.-E."/>
            <person name="Pettersson B."/>
            <person name="Uhlen M."/>
        </authorList>
    </citation>
    <scope>NUCLEOTIDE SEQUENCE [LARGE SCALE GENOMIC DNA]</scope>
    <source>
        <strain>CCUG 32753 / NCTC 10114 / PG1</strain>
    </source>
</reference>